<comment type="function">
    <text evidence="1">May regulate nociceptor function and/or development, including the sensation or modulation of pain. Functions as a specific membrane receptor for beta-alanine. The receptor couples with G-protein G(q) and G(i) (By similarity).</text>
</comment>
<comment type="subcellular location">
    <subcellularLocation>
        <location>Cell membrane</location>
        <topology>Multi-pass membrane protein</topology>
    </subcellularLocation>
</comment>
<comment type="tissue specificity">
    <text evidence="5">Expressed in a subset of sensory neurons that includes nociceptors. Expressed in the subclass of non-peptidergic sensory neurons that are IB4(+) and VR1(-).</text>
</comment>
<comment type="similarity">
    <text evidence="3">Belongs to the G-protein coupled receptor 1 family. Mas subfamily.</text>
</comment>
<dbReference type="EMBL" id="AY042209">
    <property type="protein sequence ID" value="AAK91800.1"/>
    <property type="molecule type" value="Genomic_DNA"/>
</dbReference>
<dbReference type="EMBL" id="AB154412">
    <property type="protein sequence ID" value="BAD20640.1"/>
    <property type="molecule type" value="Genomic_DNA"/>
</dbReference>
<dbReference type="CCDS" id="CCDS22057.1"/>
<dbReference type="RefSeq" id="NP_987075.1">
    <property type="nucleotide sequence ID" value="NM_203490.4"/>
</dbReference>
<dbReference type="SMR" id="Q91ZB8"/>
<dbReference type="FunCoup" id="Q91ZB8">
    <property type="interactions" value="54"/>
</dbReference>
<dbReference type="STRING" id="10090.ENSMUSP00000063021"/>
<dbReference type="GuidetoPHARMACOLOGY" id="152"/>
<dbReference type="GlyCosmos" id="Q91ZB8">
    <property type="glycosylation" value="1 site, No reported glycans"/>
</dbReference>
<dbReference type="GlyGen" id="Q91ZB8">
    <property type="glycosylation" value="1 site"/>
</dbReference>
<dbReference type="PhosphoSitePlus" id="Q91ZB8"/>
<dbReference type="PaxDb" id="10090-ENSMUSP00000063021"/>
<dbReference type="ProteomicsDB" id="290315"/>
<dbReference type="Antibodypedia" id="16747">
    <property type="antibodies" value="101 antibodies from 24 providers"/>
</dbReference>
<dbReference type="DNASU" id="211578"/>
<dbReference type="Ensembl" id="ENSMUST00000062163.8">
    <property type="protein sequence ID" value="ENSMUSP00000063021.7"/>
    <property type="gene ID" value="ENSMUSG00000051207.8"/>
</dbReference>
<dbReference type="GeneID" id="211578"/>
<dbReference type="KEGG" id="mmu:211578"/>
<dbReference type="UCSC" id="uc009kra.1">
    <property type="organism name" value="mouse"/>
</dbReference>
<dbReference type="AGR" id="MGI:3033142"/>
<dbReference type="CTD" id="116512"/>
<dbReference type="MGI" id="MGI:3033142">
    <property type="gene designation" value="Mrgprd"/>
</dbReference>
<dbReference type="VEuPathDB" id="HostDB:ENSMUSG00000051207"/>
<dbReference type="eggNOG" id="ENOG502SNJC">
    <property type="taxonomic scope" value="Eukaryota"/>
</dbReference>
<dbReference type="GeneTree" id="ENSGT01030000234639"/>
<dbReference type="HOGENOM" id="CLU_009579_4_1_1"/>
<dbReference type="InParanoid" id="Q91ZB8"/>
<dbReference type="OMA" id="KCHRPRH"/>
<dbReference type="OrthoDB" id="9631784at2759"/>
<dbReference type="PhylomeDB" id="Q91ZB8"/>
<dbReference type="TreeFam" id="TF336336"/>
<dbReference type="BioGRID-ORCS" id="211578">
    <property type="hits" value="13 hits in 77 CRISPR screens"/>
</dbReference>
<dbReference type="PRO" id="PR:Q91ZB8"/>
<dbReference type="Proteomes" id="UP000000589">
    <property type="component" value="Chromosome 7"/>
</dbReference>
<dbReference type="RNAct" id="Q91ZB8">
    <property type="molecule type" value="protein"/>
</dbReference>
<dbReference type="Bgee" id="ENSMUSG00000051207">
    <property type="expression patterns" value="Expressed in presumptive midbrain and 14 other cell types or tissues"/>
</dbReference>
<dbReference type="ExpressionAtlas" id="Q91ZB8">
    <property type="expression patterns" value="differential"/>
</dbReference>
<dbReference type="GO" id="GO:0005886">
    <property type="term" value="C:plasma membrane"/>
    <property type="evidence" value="ECO:0007669"/>
    <property type="project" value="UniProtKB-SubCell"/>
</dbReference>
<dbReference type="GO" id="GO:0008528">
    <property type="term" value="F:G protein-coupled peptide receptor activity"/>
    <property type="evidence" value="ECO:0000314"/>
    <property type="project" value="MGI"/>
</dbReference>
<dbReference type="GO" id="GO:0007189">
    <property type="term" value="P:adenylate cyclase-activating G protein-coupled receptor signaling pathway"/>
    <property type="evidence" value="ECO:0000315"/>
    <property type="project" value="MGI"/>
</dbReference>
<dbReference type="GO" id="GO:0002033">
    <property type="term" value="P:angiotensin-mediated vasodilation involved in regulation of systemic arterial blood pressure"/>
    <property type="evidence" value="ECO:0000315"/>
    <property type="project" value="MGI"/>
</dbReference>
<dbReference type="CDD" id="cd15108">
    <property type="entry name" value="7tmA_MrgprD"/>
    <property type="match status" value="1"/>
</dbReference>
<dbReference type="FunFam" id="1.20.1070.10:FF:000193">
    <property type="entry name" value="Mas-related G-protein coupled receptor member E"/>
    <property type="match status" value="1"/>
</dbReference>
<dbReference type="Gene3D" id="1.20.1070.10">
    <property type="entry name" value="Rhodopsin 7-helix transmembrane proteins"/>
    <property type="match status" value="1"/>
</dbReference>
<dbReference type="InterPro" id="IPR000276">
    <property type="entry name" value="GPCR_Rhodpsn"/>
</dbReference>
<dbReference type="InterPro" id="IPR017452">
    <property type="entry name" value="GPCR_Rhodpsn_7TM"/>
</dbReference>
<dbReference type="InterPro" id="IPR026232">
    <property type="entry name" value="MRGPCRD"/>
</dbReference>
<dbReference type="InterPro" id="IPR026234">
    <property type="entry name" value="MRGPCRFAMILY"/>
</dbReference>
<dbReference type="PANTHER" id="PTHR11334">
    <property type="entry name" value="MAS-RELATED G-PROTEIN COUPLED RECEPTOR"/>
    <property type="match status" value="1"/>
</dbReference>
<dbReference type="PANTHER" id="PTHR11334:SF57">
    <property type="entry name" value="MAS-RELATED G-PROTEIN COUPLED RECEPTOR MEMBER D"/>
    <property type="match status" value="1"/>
</dbReference>
<dbReference type="Pfam" id="PF00001">
    <property type="entry name" value="7tm_1"/>
    <property type="match status" value="1"/>
</dbReference>
<dbReference type="PRINTS" id="PR00237">
    <property type="entry name" value="GPCRRHODOPSN"/>
</dbReference>
<dbReference type="PRINTS" id="PR02110">
    <property type="entry name" value="MRGPCRD"/>
</dbReference>
<dbReference type="PRINTS" id="PR02108">
    <property type="entry name" value="MRGPCRFAMILY"/>
</dbReference>
<dbReference type="SUPFAM" id="SSF81321">
    <property type="entry name" value="Family A G protein-coupled receptor-like"/>
    <property type="match status" value="1"/>
</dbReference>
<dbReference type="PROSITE" id="PS50262">
    <property type="entry name" value="G_PROTEIN_RECEP_F1_2"/>
    <property type="match status" value="1"/>
</dbReference>
<gene>
    <name type="primary">Mrgprd</name>
    <name type="synonym">Gm499</name>
    <name type="synonym">Mrgd</name>
</gene>
<proteinExistence type="evidence at transcript level"/>
<name>MRGRD_MOUSE</name>
<organism>
    <name type="scientific">Mus musculus</name>
    <name type="common">Mouse</name>
    <dbReference type="NCBI Taxonomy" id="10090"/>
    <lineage>
        <taxon>Eukaryota</taxon>
        <taxon>Metazoa</taxon>
        <taxon>Chordata</taxon>
        <taxon>Craniata</taxon>
        <taxon>Vertebrata</taxon>
        <taxon>Euteleostomi</taxon>
        <taxon>Mammalia</taxon>
        <taxon>Eutheria</taxon>
        <taxon>Euarchontoglires</taxon>
        <taxon>Glires</taxon>
        <taxon>Rodentia</taxon>
        <taxon>Myomorpha</taxon>
        <taxon>Muroidea</taxon>
        <taxon>Muridae</taxon>
        <taxon>Murinae</taxon>
        <taxon>Mus</taxon>
        <taxon>Mus</taxon>
    </lineage>
</organism>
<accession>Q91ZB8</accession>
<evidence type="ECO:0000250" key="1"/>
<evidence type="ECO:0000255" key="2"/>
<evidence type="ECO:0000255" key="3">
    <source>
        <dbReference type="PROSITE-ProRule" id="PRU00521"/>
    </source>
</evidence>
<evidence type="ECO:0000256" key="4">
    <source>
        <dbReference type="SAM" id="MobiDB-lite"/>
    </source>
</evidence>
<evidence type="ECO:0000269" key="5">
    <source>
    </source>
</evidence>
<reference key="1">
    <citation type="journal article" date="2001" name="Cell">
        <title>A diverse family of GPCRs expressed in specific subsets of nociceptive sensory neurons.</title>
        <authorList>
            <person name="Dong X."/>
            <person name="Han S.-K."/>
            <person name="Zylka M.J."/>
            <person name="Simon M.I."/>
            <person name="Anderson D.J."/>
        </authorList>
    </citation>
    <scope>NUCLEOTIDE SEQUENCE [GENOMIC DNA]</scope>
    <scope>TISSUE SPECIFICITY</scope>
    <source>
        <strain>C57BL/6J</strain>
    </source>
</reference>
<reference key="2">
    <citation type="journal article" date="2004" name="J. Biol. Chem.">
        <title>Identification of a G protein-coupled receptor specifically responsive to beta-alanine.</title>
        <authorList>
            <person name="Shinohara T."/>
            <person name="Harada M."/>
            <person name="Ogi K."/>
            <person name="Maruyama M."/>
            <person name="Fujii R."/>
            <person name="Tanaka H."/>
            <person name="Fukusumi S."/>
            <person name="Komatsu H."/>
            <person name="Hosoya M."/>
            <person name="Noguchi Y."/>
            <person name="Watanabe T."/>
            <person name="Moriya T."/>
            <person name="Itoh Y."/>
            <person name="Hinuma S."/>
        </authorList>
    </citation>
    <scope>NUCLEOTIDE SEQUENCE [GENOMIC DNA]</scope>
</reference>
<keyword id="KW-1003">Cell membrane</keyword>
<keyword id="KW-0297">G-protein coupled receptor</keyword>
<keyword id="KW-0325">Glycoprotein</keyword>
<keyword id="KW-0472">Membrane</keyword>
<keyword id="KW-0675">Receptor</keyword>
<keyword id="KW-1185">Reference proteome</keyword>
<keyword id="KW-0807">Transducer</keyword>
<keyword id="KW-0812">Transmembrane</keyword>
<keyword id="KW-1133">Transmembrane helix</keyword>
<feature type="chain" id="PRO_0000069758" description="Mas-related G-protein coupled receptor member D">
    <location>
        <begin position="1"/>
        <end position="321"/>
    </location>
</feature>
<feature type="topological domain" description="Extracellular" evidence="2">
    <location>
        <begin position="1"/>
        <end position="8"/>
    </location>
</feature>
<feature type="transmembrane region" description="Helical; Name=1" evidence="2">
    <location>
        <begin position="9"/>
        <end position="29"/>
    </location>
</feature>
<feature type="topological domain" description="Cytoplasmic" evidence="2">
    <location>
        <position position="30"/>
    </location>
</feature>
<feature type="transmembrane region" description="Helical; Name=2" evidence="2">
    <location>
        <begin position="31"/>
        <end position="51"/>
    </location>
</feature>
<feature type="topological domain" description="Extracellular" evidence="2">
    <location>
        <begin position="52"/>
        <end position="72"/>
    </location>
</feature>
<feature type="transmembrane region" description="Helical; Name=3" evidence="2">
    <location>
        <begin position="73"/>
        <end position="93"/>
    </location>
</feature>
<feature type="topological domain" description="Cytoplasmic" evidence="2">
    <location>
        <begin position="94"/>
        <end position="146"/>
    </location>
</feature>
<feature type="transmembrane region" description="Helical; Name=4" evidence="2">
    <location>
        <begin position="147"/>
        <end position="167"/>
    </location>
</feature>
<feature type="topological domain" description="Extracellular" evidence="2">
    <location>
        <begin position="168"/>
        <end position="181"/>
    </location>
</feature>
<feature type="transmembrane region" description="Helical; Name=5" evidence="2">
    <location>
        <begin position="182"/>
        <end position="202"/>
    </location>
</feature>
<feature type="topological domain" description="Cytoplasmic" evidence="2">
    <location>
        <begin position="203"/>
        <end position="220"/>
    </location>
</feature>
<feature type="transmembrane region" description="Helical; Name=6" evidence="2">
    <location>
        <begin position="221"/>
        <end position="241"/>
    </location>
</feature>
<feature type="topological domain" description="Extracellular" evidence="2">
    <location>
        <begin position="242"/>
        <end position="260"/>
    </location>
</feature>
<feature type="transmembrane region" description="Helical; Name=7" evidence="2">
    <location>
        <begin position="261"/>
        <end position="281"/>
    </location>
</feature>
<feature type="topological domain" description="Cytoplasmic" evidence="2">
    <location>
        <begin position="282"/>
        <end position="321"/>
    </location>
</feature>
<feature type="region of interest" description="Disordered" evidence="4">
    <location>
        <begin position="302"/>
        <end position="321"/>
    </location>
</feature>
<feature type="compositionally biased region" description="Basic and acidic residues" evidence="4">
    <location>
        <begin position="302"/>
        <end position="311"/>
    </location>
</feature>
<feature type="compositionally biased region" description="Polar residues" evidence="4">
    <location>
        <begin position="312"/>
        <end position="321"/>
    </location>
</feature>
<feature type="glycosylation site" description="N-linked (GlcNAc...) asparagine" evidence="2">
    <location>
        <position position="2"/>
    </location>
</feature>
<protein>
    <recommendedName>
        <fullName>Mas-related G-protein coupled receptor member D</fullName>
    </recommendedName>
    <alternativeName>
        <fullName>Beta-alanine receptor</fullName>
    </alternativeName>
    <alternativeName>
        <fullName>G-protein coupled receptor TGR7</fullName>
    </alternativeName>
</protein>
<sequence>MNSTLDSSPAPGLTISPTMDLVTWIYFSVTFLAMATCVGGMAGNSLVIWLLSCNGMQRSPFCVYVLNLAVADFLFLFCMASMLSLETGPLLIVNISAKIYEGMRRIKYFAYTAGLSLLTAISTQRCLSVLFPIWYKCHRPRHLSSVVSGALWALAFLMNFLASFFCVQFWHPNKHQCFKVDIVFNSLILGIFMPVMILTSTILFIRVRKNSLMQRRRPRRLYVVILTSILVFLTCSLPLGINWFLLYWVDVKRDVRLLYSCVSRFSSSLSSSANPVIYFLVGSQKSHRLQESLGAVLGRALRDEPEPEGRETPSTCTNDGV</sequence>